<reference key="1">
    <citation type="journal article" date="2005" name="Genetics">
        <title>Sequence finishing and gene mapping for Candida albicans chromosome 7 and syntenic analysis against the Saccharomyces cerevisiae genome.</title>
        <authorList>
            <person name="Chibana H."/>
            <person name="Oka N."/>
            <person name="Nakayama H."/>
            <person name="Aoyama T."/>
            <person name="Magee B.B."/>
            <person name="Magee P.T."/>
            <person name="Mikami Y."/>
        </authorList>
    </citation>
    <scope>NUCLEOTIDE SEQUENCE [LARGE SCALE GENOMIC DNA]</scope>
    <source>
        <strain>SC5314 / ATCC MYA-2876</strain>
    </source>
</reference>
<reference key="2">
    <citation type="journal article" date="2004" name="Proc. Natl. Acad. Sci. U.S.A.">
        <title>The diploid genome sequence of Candida albicans.</title>
        <authorList>
            <person name="Jones T."/>
            <person name="Federspiel N.A."/>
            <person name="Chibana H."/>
            <person name="Dungan J."/>
            <person name="Kalman S."/>
            <person name="Magee B.B."/>
            <person name="Newport G."/>
            <person name="Thorstenson Y.R."/>
            <person name="Agabian N."/>
            <person name="Magee P.T."/>
            <person name="Davis R.W."/>
            <person name="Scherer S."/>
        </authorList>
    </citation>
    <scope>NUCLEOTIDE SEQUENCE [LARGE SCALE GENOMIC DNA]</scope>
    <source>
        <strain>SC5314 / ATCC MYA-2876</strain>
    </source>
</reference>
<reference key="3">
    <citation type="journal article" date="2007" name="Genome Biol.">
        <title>Assembly of the Candida albicans genome into sixteen supercontigs aligned on the eight chromosomes.</title>
        <authorList>
            <person name="van het Hoog M."/>
            <person name="Rast T.J."/>
            <person name="Martchenko M."/>
            <person name="Grindle S."/>
            <person name="Dignard D."/>
            <person name="Hogues H."/>
            <person name="Cuomo C."/>
            <person name="Berriman M."/>
            <person name="Scherer S."/>
            <person name="Magee B.B."/>
            <person name="Whiteway M."/>
            <person name="Chibana H."/>
            <person name="Nantel A."/>
            <person name="Magee P.T."/>
        </authorList>
    </citation>
    <scope>GENOME REANNOTATION</scope>
    <source>
        <strain>SC5314 / ATCC MYA-2876</strain>
    </source>
</reference>
<reference key="4">
    <citation type="journal article" date="2013" name="Genome Biol.">
        <title>Assembly of a phased diploid Candida albicans genome facilitates allele-specific measurements and provides a simple model for repeat and indel structure.</title>
        <authorList>
            <person name="Muzzey D."/>
            <person name="Schwartz K."/>
            <person name="Weissman J.S."/>
            <person name="Sherlock G."/>
        </authorList>
    </citation>
    <scope>NUCLEOTIDE SEQUENCE [LARGE SCALE GENOMIC DNA]</scope>
    <scope>GENOME REANNOTATION</scope>
    <source>
        <strain>SC5314 / ATCC MYA-2876</strain>
    </source>
</reference>
<name>MVP1_CANAL</name>
<dbReference type="EMBL" id="AP006852">
    <property type="protein sequence ID" value="BAE44606.1"/>
    <property type="molecule type" value="Genomic_DNA"/>
</dbReference>
<dbReference type="EMBL" id="CP017629">
    <property type="protein sequence ID" value="AOW30455.1"/>
    <property type="molecule type" value="Genomic_DNA"/>
</dbReference>
<dbReference type="RefSeq" id="XP_019331023.1">
    <property type="nucleotide sequence ID" value="XM_019475478.1"/>
</dbReference>
<dbReference type="SMR" id="Q3MPQ4"/>
<dbReference type="FunCoup" id="Q3MPQ4">
    <property type="interactions" value="173"/>
</dbReference>
<dbReference type="STRING" id="237561.Q3MPQ4"/>
<dbReference type="EnsemblFungi" id="C7_00790W_A-T">
    <property type="protein sequence ID" value="C7_00790W_A-T-p1"/>
    <property type="gene ID" value="C7_00790W_A"/>
</dbReference>
<dbReference type="GeneID" id="3637943"/>
<dbReference type="KEGG" id="cal:CAALFM_C700790WA"/>
<dbReference type="CGD" id="CAL0000175009">
    <property type="gene designation" value="orf19.7039"/>
</dbReference>
<dbReference type="VEuPathDB" id="FungiDB:C7_00790W_A"/>
<dbReference type="eggNOG" id="KOG2273">
    <property type="taxonomic scope" value="Eukaryota"/>
</dbReference>
<dbReference type="HOGENOM" id="CLU_009058_0_0_1"/>
<dbReference type="InParanoid" id="Q3MPQ4"/>
<dbReference type="OrthoDB" id="10064318at2759"/>
<dbReference type="Proteomes" id="UP000000559">
    <property type="component" value="Chromosome 7"/>
</dbReference>
<dbReference type="GO" id="GO:0005829">
    <property type="term" value="C:cytosol"/>
    <property type="evidence" value="ECO:0007669"/>
    <property type="project" value="GOC"/>
</dbReference>
<dbReference type="GO" id="GO:0005768">
    <property type="term" value="C:endosome"/>
    <property type="evidence" value="ECO:0000318"/>
    <property type="project" value="GO_Central"/>
</dbReference>
<dbReference type="GO" id="GO:0016020">
    <property type="term" value="C:membrane"/>
    <property type="evidence" value="ECO:0007669"/>
    <property type="project" value="UniProtKB-SubCell"/>
</dbReference>
<dbReference type="GO" id="GO:0032266">
    <property type="term" value="F:phosphatidylinositol-3-phosphate binding"/>
    <property type="evidence" value="ECO:0000318"/>
    <property type="project" value="GO_Central"/>
</dbReference>
<dbReference type="GO" id="GO:0006623">
    <property type="term" value="P:protein targeting to vacuole"/>
    <property type="evidence" value="ECO:0000318"/>
    <property type="project" value="GO_Central"/>
</dbReference>
<dbReference type="GO" id="GO:0042147">
    <property type="term" value="P:retrograde transport, endosome to Golgi"/>
    <property type="evidence" value="ECO:0000318"/>
    <property type="project" value="GO_Central"/>
</dbReference>
<dbReference type="CDD" id="cd07597">
    <property type="entry name" value="BAR_SNX8"/>
    <property type="match status" value="1"/>
</dbReference>
<dbReference type="CDD" id="cd06866">
    <property type="entry name" value="PX_SNX8_Mvp1p_like"/>
    <property type="match status" value="1"/>
</dbReference>
<dbReference type="FunFam" id="3.30.1520.10:FF:000042">
    <property type="entry name" value="Sorting nexin mvp1"/>
    <property type="match status" value="1"/>
</dbReference>
<dbReference type="Gene3D" id="3.30.1520.10">
    <property type="entry name" value="Phox-like domain"/>
    <property type="match status" value="1"/>
</dbReference>
<dbReference type="InterPro" id="IPR001683">
    <property type="entry name" value="PX_dom"/>
</dbReference>
<dbReference type="InterPro" id="IPR036871">
    <property type="entry name" value="PX_dom_sf"/>
</dbReference>
<dbReference type="InterPro" id="IPR028662">
    <property type="entry name" value="SNX8/Mvp1"/>
</dbReference>
<dbReference type="InterPro" id="IPR035704">
    <property type="entry name" value="SNX8/Mvp1_PX"/>
</dbReference>
<dbReference type="InterPro" id="IPR045734">
    <property type="entry name" value="Snx8_BAR_dom"/>
</dbReference>
<dbReference type="PANTHER" id="PTHR47554">
    <property type="entry name" value="SORTING NEXIN MVP1"/>
    <property type="match status" value="1"/>
</dbReference>
<dbReference type="PANTHER" id="PTHR47554:SF1">
    <property type="entry name" value="SORTING NEXIN MVP1"/>
    <property type="match status" value="1"/>
</dbReference>
<dbReference type="Pfam" id="PF00787">
    <property type="entry name" value="PX"/>
    <property type="match status" value="1"/>
</dbReference>
<dbReference type="Pfam" id="PF19566">
    <property type="entry name" value="Snx8_BAR_dom"/>
    <property type="match status" value="1"/>
</dbReference>
<dbReference type="SMART" id="SM00312">
    <property type="entry name" value="PX"/>
    <property type="match status" value="1"/>
</dbReference>
<dbReference type="SUPFAM" id="SSF64268">
    <property type="entry name" value="PX domain"/>
    <property type="match status" value="1"/>
</dbReference>
<dbReference type="PROSITE" id="PS50195">
    <property type="entry name" value="PX"/>
    <property type="match status" value="1"/>
</dbReference>
<comment type="function">
    <text evidence="1">Required for vacuolar protein sorting.</text>
</comment>
<comment type="subcellular location">
    <subcellularLocation>
        <location evidence="1">Cytoplasm</location>
    </subcellularLocation>
    <subcellularLocation>
        <location evidence="1">Membrane</location>
        <topology evidence="1">Peripheral membrane protein</topology>
        <orientation evidence="1">Cytoplasmic side</orientation>
    </subcellularLocation>
</comment>
<comment type="domain">
    <text evidence="1">The PX domain binds phosphatidylinositol 3-phosphate which is necessary for peripheral membrane localization.</text>
</comment>
<comment type="similarity">
    <text evidence="4">Belongs to the sorting nexin family.</text>
</comment>
<protein>
    <recommendedName>
        <fullName>Sorting nexin MVP1</fullName>
    </recommendedName>
</protein>
<feature type="chain" id="PRO_0000238596" description="Sorting nexin MVP1">
    <location>
        <begin position="1"/>
        <end position="744"/>
    </location>
</feature>
<feature type="domain" description="PX" evidence="2">
    <location>
        <begin position="326"/>
        <end position="444"/>
    </location>
</feature>
<feature type="region of interest" description="Disordered" evidence="3">
    <location>
        <begin position="1"/>
        <end position="40"/>
    </location>
</feature>
<feature type="region of interest" description="Disordered" evidence="3">
    <location>
        <begin position="218"/>
        <end position="252"/>
    </location>
</feature>
<feature type="region of interest" description="Disordered" evidence="3">
    <location>
        <begin position="273"/>
        <end position="299"/>
    </location>
</feature>
<feature type="compositionally biased region" description="Polar residues" evidence="3">
    <location>
        <begin position="26"/>
        <end position="40"/>
    </location>
</feature>
<feature type="compositionally biased region" description="Polar residues" evidence="3">
    <location>
        <begin position="218"/>
        <end position="243"/>
    </location>
</feature>
<feature type="compositionally biased region" description="Gly residues" evidence="3">
    <location>
        <begin position="283"/>
        <end position="297"/>
    </location>
</feature>
<feature type="binding site" evidence="1">
    <location>
        <position position="369"/>
    </location>
    <ligand>
        <name>a 1,2-diacyl-sn-glycero-3-phospho-(1D-myo-inositol-3-phosphate)</name>
        <dbReference type="ChEBI" id="CHEBI:58088"/>
    </ligand>
</feature>
<feature type="binding site" evidence="1">
    <location>
        <position position="371"/>
    </location>
    <ligand>
        <name>a 1,2-diacyl-sn-glycero-3-phospho-(1D-myo-inositol-3-phosphate)</name>
        <dbReference type="ChEBI" id="CHEBI:58088"/>
    </ligand>
</feature>
<feature type="binding site" evidence="1">
    <location>
        <position position="395"/>
    </location>
    <ligand>
        <name>a 1,2-diacyl-sn-glycero-3-phospho-(1D-myo-inositol-3-phosphate)</name>
        <dbReference type="ChEBI" id="CHEBI:58088"/>
    </ligand>
</feature>
<feature type="binding site" evidence="1">
    <location>
        <position position="410"/>
    </location>
    <ligand>
        <name>a 1,2-diacyl-sn-glycero-3-phospho-(1D-myo-inositol-3-phosphate)</name>
        <dbReference type="ChEBI" id="CHEBI:58088"/>
    </ligand>
</feature>
<feature type="sequence conflict" description="In Ref. 1; BAE44606." evidence="4" ref="1">
    <original>T</original>
    <variation>TV</variation>
    <location>
        <position position="398"/>
    </location>
</feature>
<keyword id="KW-0963">Cytoplasm</keyword>
<keyword id="KW-0472">Membrane</keyword>
<keyword id="KW-0653">Protein transport</keyword>
<keyword id="KW-1185">Reference proteome</keyword>
<keyword id="KW-0813">Transport</keyword>
<proteinExistence type="inferred from homology"/>
<sequence length="744" mass="84897">MNSNIEDDPWSSGWNDDNDNNNNNNTSINDPLTGATATTTPYQSSYLTSSQLFTSTGGGGSGSGGGYNSGVNTYNTTIPPNLINVPSSYETIYSHFITKYNNNNNNNNSNSTFTLNDFEINIIDKLISLNYLTNYQKQKILDIIYENNLLPINQSFKFYQILGLLALEIDVPGTGDYVTLQFRLNNNLPDLPEKFINEIINEENEQEEQTSGLLGNRNRSIQSHSHFGPNNQDDWNIDDSTTISGGGGGGGGNFGDPLLVDHSYIHDDLIDESRSVGGTQPQQGGGGGSGGGSGSGSGTIAPNVDSSYIEKYINDIKDQFKPLFSGIDLIKIKEVPEKEGIIFKHINYMITHDLKIGGTSSGTKKVIRRYSDFVWLMEYLLEKYPFRVIPGLPPKKFTGASPDSQFLQRRRRGLHRFLNQLIKHPILSQEPIVQSFLTVPTDLTTWKKQAKIDSSLEFKGQKIQTDFINVIWPIMGEPFLKKWRQAEENIQFIIDKWVKIIILVERYERRQQQISFDNGKFAEMLNGFSKLNTKIYPDNEDNNNSTRNDVNVNVVVVDNNENYKQDFDFNSSGDIININQCLNSIGEFFNKSSQVLIDESYIINTKTLEKFKNYLDYLNSLQELFERTKQLSINQIDLLDKRIKDQEIKFKKISEENPDIKGGELIKLRQSIINDKQEIFQQLNKDWLIKQCCLQEFIIFQETQFLITELWVEWCKDRLKCQEKLVGLYDNLNQEIIHDMPLER</sequence>
<evidence type="ECO:0000250" key="1"/>
<evidence type="ECO:0000255" key="2">
    <source>
        <dbReference type="PROSITE-ProRule" id="PRU00147"/>
    </source>
</evidence>
<evidence type="ECO:0000256" key="3">
    <source>
        <dbReference type="SAM" id="MobiDB-lite"/>
    </source>
</evidence>
<evidence type="ECO:0000305" key="4"/>
<organism>
    <name type="scientific">Candida albicans (strain SC5314 / ATCC MYA-2876)</name>
    <name type="common">Yeast</name>
    <dbReference type="NCBI Taxonomy" id="237561"/>
    <lineage>
        <taxon>Eukaryota</taxon>
        <taxon>Fungi</taxon>
        <taxon>Dikarya</taxon>
        <taxon>Ascomycota</taxon>
        <taxon>Saccharomycotina</taxon>
        <taxon>Pichiomycetes</taxon>
        <taxon>Debaryomycetaceae</taxon>
        <taxon>Candida/Lodderomyces clade</taxon>
        <taxon>Candida</taxon>
    </lineage>
</organism>
<gene>
    <name type="primary">MVP1</name>
    <name type="ordered locus">CAALFM_C700790WA</name>
    <name type="ORF">CaJ7.0093</name>
    <name type="ORF">CaO19.7038</name>
    <name type="ORF">CaO19.7039</name>
</gene>
<accession>Q3MPQ4</accession>
<accession>A0A1D8PQP5</accession>
<accession>Q5AFM9</accession>
<accession>Q5AFN0</accession>